<protein>
    <recommendedName>
        <fullName evidence="1">Putative multidrug resistance protein MdtD</fullName>
    </recommendedName>
</protein>
<evidence type="ECO:0000255" key="1">
    <source>
        <dbReference type="HAMAP-Rule" id="MF_01577"/>
    </source>
</evidence>
<feature type="chain" id="PRO_1000069264" description="Putative multidrug resistance protein MdtD">
    <location>
        <begin position="1"/>
        <end position="471"/>
    </location>
</feature>
<feature type="transmembrane region" description="Helical" evidence="1">
    <location>
        <begin position="12"/>
        <end position="32"/>
    </location>
</feature>
<feature type="transmembrane region" description="Helical" evidence="1">
    <location>
        <begin position="49"/>
        <end position="69"/>
    </location>
</feature>
<feature type="transmembrane region" description="Helical" evidence="1">
    <location>
        <begin position="72"/>
        <end position="92"/>
    </location>
</feature>
<feature type="transmembrane region" description="Helical" evidence="1">
    <location>
        <begin position="101"/>
        <end position="123"/>
    </location>
</feature>
<feature type="transmembrane region" description="Helical" evidence="1">
    <location>
        <begin position="138"/>
        <end position="158"/>
    </location>
</feature>
<feature type="transmembrane region" description="Helical" evidence="1">
    <location>
        <begin position="165"/>
        <end position="185"/>
    </location>
</feature>
<feature type="transmembrane region" description="Helical" evidence="1">
    <location>
        <begin position="195"/>
        <end position="215"/>
    </location>
</feature>
<feature type="transmembrane region" description="Helical" evidence="1">
    <location>
        <begin position="220"/>
        <end position="240"/>
    </location>
</feature>
<feature type="transmembrane region" description="Helical" evidence="1">
    <location>
        <begin position="265"/>
        <end position="285"/>
    </location>
</feature>
<feature type="transmembrane region" description="Helical" evidence="1">
    <location>
        <begin position="286"/>
        <end position="306"/>
    </location>
</feature>
<feature type="transmembrane region" description="Helical" evidence="1">
    <location>
        <begin position="342"/>
        <end position="362"/>
    </location>
</feature>
<feature type="transmembrane region" description="Helical" evidence="1">
    <location>
        <begin position="393"/>
        <end position="413"/>
    </location>
</feature>
<feature type="transmembrane region" description="Helical" evidence="1">
    <location>
        <begin position="431"/>
        <end position="451"/>
    </location>
</feature>
<sequence length="471" mass="51621">MTDLPNNVRWQLWIVAFGFFMQSLDTTIVNTALPSMAKSLGESPLHMHMVIVSYVLTVAVMLPASGWMADKIGVRNIFFTAIVLFTLGSLFCAKADTLNELVMSRVLQGVGGAMMVPVGRLTVMKIVPREQYMAAMTFVTLPGQVGPLLGPALGGILVEYASWHWIFLINLPVGIVGAIATLWLMPNYKMQTRRFDIFGFVLLAAGMATLTLALDGQKGLGISTLTLCLLIVIGIVSILWYLWHARDNDRALFSLALFRNTTYRIGLFGSFVGRLGSGMLPFMTPVFLQIGLGFSPFHAGLMMIPMVLGSMGMKRIVVQVVNYFGYRRVLVVCTLGLALISLVFMAVALMGWYYVLPLVLFFQGMINSTRFSSMNTLTLKDLPDELASSGNSLLSMIMQLSMSVGVTVAGLLLGMYGQQHLGADTAGAHHVFLYTYLSMAVIIALPALIFARVPNDTSKNVVIGRRKRSER</sequence>
<accession>A4WCC3</accession>
<organism>
    <name type="scientific">Enterobacter sp. (strain 638)</name>
    <dbReference type="NCBI Taxonomy" id="399742"/>
    <lineage>
        <taxon>Bacteria</taxon>
        <taxon>Pseudomonadati</taxon>
        <taxon>Pseudomonadota</taxon>
        <taxon>Gammaproteobacteria</taxon>
        <taxon>Enterobacterales</taxon>
        <taxon>Enterobacteriaceae</taxon>
        <taxon>Enterobacter</taxon>
    </lineage>
</organism>
<comment type="subcellular location">
    <subcellularLocation>
        <location evidence="1">Cell inner membrane</location>
        <topology evidence="1">Multi-pass membrane protein</topology>
    </subcellularLocation>
</comment>
<comment type="similarity">
    <text evidence="1">Belongs to the major facilitator superfamily. TCR/Tet family.</text>
</comment>
<dbReference type="EMBL" id="CP000653">
    <property type="protein sequence ID" value="ABP61353.1"/>
    <property type="molecule type" value="Genomic_DNA"/>
</dbReference>
<dbReference type="RefSeq" id="WP_015959686.1">
    <property type="nucleotide sequence ID" value="NC_009436.1"/>
</dbReference>
<dbReference type="SMR" id="A4WCC3"/>
<dbReference type="STRING" id="399742.Ent638_2687"/>
<dbReference type="KEGG" id="ent:Ent638_2687"/>
<dbReference type="eggNOG" id="COG0477">
    <property type="taxonomic scope" value="Bacteria"/>
</dbReference>
<dbReference type="HOGENOM" id="CLU_000960_28_0_6"/>
<dbReference type="OrthoDB" id="9812221at2"/>
<dbReference type="Proteomes" id="UP000000230">
    <property type="component" value="Chromosome"/>
</dbReference>
<dbReference type="GO" id="GO:0005886">
    <property type="term" value="C:plasma membrane"/>
    <property type="evidence" value="ECO:0007669"/>
    <property type="project" value="UniProtKB-SubCell"/>
</dbReference>
<dbReference type="GO" id="GO:0022857">
    <property type="term" value="F:transmembrane transporter activity"/>
    <property type="evidence" value="ECO:0007669"/>
    <property type="project" value="UniProtKB-UniRule"/>
</dbReference>
<dbReference type="CDD" id="cd17503">
    <property type="entry name" value="MFS_LmrB_MDR_like"/>
    <property type="match status" value="1"/>
</dbReference>
<dbReference type="FunFam" id="1.20.1250.20:FF:000021">
    <property type="entry name" value="Putative multidrug resistance protein MdtD"/>
    <property type="match status" value="1"/>
</dbReference>
<dbReference type="FunFam" id="1.20.1720.10:FF:000001">
    <property type="entry name" value="Putative multidrug resistance protein MdtD"/>
    <property type="match status" value="1"/>
</dbReference>
<dbReference type="Gene3D" id="1.20.1250.20">
    <property type="entry name" value="MFS general substrate transporter like domains"/>
    <property type="match status" value="1"/>
</dbReference>
<dbReference type="Gene3D" id="1.20.1720.10">
    <property type="entry name" value="Multidrug resistance protein D"/>
    <property type="match status" value="1"/>
</dbReference>
<dbReference type="HAMAP" id="MF_01577">
    <property type="entry name" value="MFS_MdtD"/>
    <property type="match status" value="1"/>
</dbReference>
<dbReference type="InterPro" id="IPR011701">
    <property type="entry name" value="MFS"/>
</dbReference>
<dbReference type="InterPro" id="IPR020846">
    <property type="entry name" value="MFS_dom"/>
</dbReference>
<dbReference type="InterPro" id="IPR036259">
    <property type="entry name" value="MFS_trans_sf"/>
</dbReference>
<dbReference type="InterPro" id="IPR023721">
    <property type="entry name" value="Multi-R_MdtD"/>
</dbReference>
<dbReference type="NCBIfam" id="NF007799">
    <property type="entry name" value="PRK10504.1"/>
    <property type="match status" value="1"/>
</dbReference>
<dbReference type="PANTHER" id="PTHR42718:SF46">
    <property type="entry name" value="BLR6921 PROTEIN"/>
    <property type="match status" value="1"/>
</dbReference>
<dbReference type="PANTHER" id="PTHR42718">
    <property type="entry name" value="MAJOR FACILITATOR SUPERFAMILY MULTIDRUG TRANSPORTER MFSC"/>
    <property type="match status" value="1"/>
</dbReference>
<dbReference type="Pfam" id="PF07690">
    <property type="entry name" value="MFS_1"/>
    <property type="match status" value="1"/>
</dbReference>
<dbReference type="PRINTS" id="PR01036">
    <property type="entry name" value="TCRTETB"/>
</dbReference>
<dbReference type="SUPFAM" id="SSF103473">
    <property type="entry name" value="MFS general substrate transporter"/>
    <property type="match status" value="1"/>
</dbReference>
<dbReference type="PROSITE" id="PS50850">
    <property type="entry name" value="MFS"/>
    <property type="match status" value="1"/>
</dbReference>
<reference key="1">
    <citation type="journal article" date="2010" name="PLoS Genet.">
        <title>Genome sequence of the plant growth promoting endophytic bacterium Enterobacter sp. 638.</title>
        <authorList>
            <person name="Taghavi S."/>
            <person name="van der Lelie D."/>
            <person name="Hoffman A."/>
            <person name="Zhang Y.B."/>
            <person name="Walla M.D."/>
            <person name="Vangronsveld J."/>
            <person name="Newman L."/>
            <person name="Monchy S."/>
        </authorList>
    </citation>
    <scope>NUCLEOTIDE SEQUENCE [LARGE SCALE GENOMIC DNA]</scope>
    <source>
        <strain>638</strain>
    </source>
</reference>
<name>MDTD_ENT38</name>
<keyword id="KW-0997">Cell inner membrane</keyword>
<keyword id="KW-1003">Cell membrane</keyword>
<keyword id="KW-0472">Membrane</keyword>
<keyword id="KW-0812">Transmembrane</keyword>
<keyword id="KW-1133">Transmembrane helix</keyword>
<keyword id="KW-0813">Transport</keyword>
<gene>
    <name evidence="1" type="primary">mdtD</name>
    <name type="ordered locus">Ent638_2687</name>
</gene>
<proteinExistence type="inferred from homology"/>